<gene>
    <name evidence="1" type="primary">wecG</name>
    <name evidence="1" type="synonym">rffM</name>
    <name type="ordered locus">SNSL254_A4209</name>
</gene>
<evidence type="ECO:0000255" key="1">
    <source>
        <dbReference type="HAMAP-Rule" id="MF_01001"/>
    </source>
</evidence>
<feature type="chain" id="PRO_1000134587" description="UDP-N-acetyl-D-mannosaminuronic acid transferase">
    <location>
        <begin position="1"/>
        <end position="246"/>
    </location>
</feature>
<dbReference type="EC" id="2.4.1.180" evidence="1"/>
<dbReference type="EMBL" id="CP001113">
    <property type="protein sequence ID" value="ACF63198.1"/>
    <property type="molecule type" value="Genomic_DNA"/>
</dbReference>
<dbReference type="RefSeq" id="WP_000183621.1">
    <property type="nucleotide sequence ID" value="NZ_CCMR01000001.1"/>
</dbReference>
<dbReference type="SMR" id="B4SZ40"/>
<dbReference type="CAZy" id="GT26">
    <property type="family name" value="Glycosyltransferase Family 26"/>
</dbReference>
<dbReference type="KEGG" id="see:SNSL254_A4209"/>
<dbReference type="HOGENOM" id="CLU_063203_3_2_6"/>
<dbReference type="UniPathway" id="UPA00566"/>
<dbReference type="Proteomes" id="UP000008824">
    <property type="component" value="Chromosome"/>
</dbReference>
<dbReference type="GO" id="GO:0047241">
    <property type="term" value="F:lipopolysaccharide N-acetylmannosaminouronosyltransferase activity"/>
    <property type="evidence" value="ECO:0007669"/>
    <property type="project" value="UniProtKB-UniRule"/>
</dbReference>
<dbReference type="GO" id="GO:0009246">
    <property type="term" value="P:enterobacterial common antigen biosynthetic process"/>
    <property type="evidence" value="ECO:0007669"/>
    <property type="project" value="UniProtKB-UniRule"/>
</dbReference>
<dbReference type="CDD" id="cd06533">
    <property type="entry name" value="Glyco_transf_WecG_TagA"/>
    <property type="match status" value="1"/>
</dbReference>
<dbReference type="HAMAP" id="MF_01001">
    <property type="entry name" value="WecG_RffM"/>
    <property type="match status" value="1"/>
</dbReference>
<dbReference type="InterPro" id="IPR023085">
    <property type="entry name" value="UDP-ManNAcA_Trfase_WecG"/>
</dbReference>
<dbReference type="InterPro" id="IPR004629">
    <property type="entry name" value="WecG_TagA_CpsF"/>
</dbReference>
<dbReference type="NCBIfam" id="NF002980">
    <property type="entry name" value="PRK03692.1"/>
    <property type="match status" value="1"/>
</dbReference>
<dbReference type="NCBIfam" id="TIGR00696">
    <property type="entry name" value="wecG_tagA_cpsF"/>
    <property type="match status" value="1"/>
</dbReference>
<dbReference type="PANTHER" id="PTHR34136">
    <property type="match status" value="1"/>
</dbReference>
<dbReference type="PANTHER" id="PTHR34136:SF1">
    <property type="entry name" value="UDP-N-ACETYL-D-MANNOSAMINURONIC ACID TRANSFERASE"/>
    <property type="match status" value="1"/>
</dbReference>
<dbReference type="Pfam" id="PF03808">
    <property type="entry name" value="Glyco_tran_WecG"/>
    <property type="match status" value="1"/>
</dbReference>
<comment type="function">
    <text evidence="1">Catalyzes the synthesis of Und-PP-GlcNAc-ManNAcA (Lipid II), the second lipid-linked intermediate involved in enterobacterial common antigen (ECA) synthesis.</text>
</comment>
<comment type="catalytic activity">
    <reaction evidence="1">
        <text>UDP-N-acetyl-alpha-D-mannosaminouronate + N-acetyl-alpha-D-glucosaminyl-di-trans,octa-cis-undecaprenyl diphosphate = beta-D-ManNAcA-(1-&gt;4)-alpha-D-GlcNAc-di-trans,octa-cis-undecaprenyl diphosphate + UDP + H(+)</text>
        <dbReference type="Rhea" id="RHEA:28366"/>
        <dbReference type="ChEBI" id="CHEBI:15378"/>
        <dbReference type="ChEBI" id="CHEBI:58223"/>
        <dbReference type="ChEBI" id="CHEBI:61495"/>
        <dbReference type="ChEBI" id="CHEBI:62959"/>
        <dbReference type="ChEBI" id="CHEBI:70731"/>
        <dbReference type="EC" id="2.4.1.180"/>
    </reaction>
</comment>
<comment type="pathway">
    <text evidence="1">Bacterial outer membrane biogenesis; enterobacterial common antigen biosynthesis.</text>
</comment>
<comment type="similarity">
    <text evidence="1">Belongs to the glycosyltransferase 26 family.</text>
</comment>
<keyword id="KW-0328">Glycosyltransferase</keyword>
<keyword id="KW-0808">Transferase</keyword>
<proteinExistence type="inferred from homology"/>
<accession>B4SZ40</accession>
<organism>
    <name type="scientific">Salmonella newport (strain SL254)</name>
    <dbReference type="NCBI Taxonomy" id="423368"/>
    <lineage>
        <taxon>Bacteria</taxon>
        <taxon>Pseudomonadati</taxon>
        <taxon>Pseudomonadota</taxon>
        <taxon>Gammaproteobacteria</taxon>
        <taxon>Enterobacterales</taxon>
        <taxon>Enterobacteriaceae</taxon>
        <taxon>Salmonella</taxon>
    </lineage>
</organism>
<sequence length="246" mass="27599">MTNNAAAPLYSLRGLPLIGWRDMSHALNYLFADGQLKQGTLVAINAEKLLTAEDNPEVRALIAAAEFKYADGISVVRSIRKKFPQAQVSRVAGADLWEALMARAGKEGTPVFLVGGKPEVLAQTEAKLRTQWNVNIVGSQDGYFTPEQRQALFARIHASGAKIVTVAMGSPKQELLMRDCREVHPHALYMGVGGTYDVFTGHVKRAPKIWQNLGLEWLYRLLSQPRRITRQMRLLRYLRWHYTGDL</sequence>
<protein>
    <recommendedName>
        <fullName evidence="1">UDP-N-acetyl-D-mannosaminuronic acid transferase</fullName>
        <shortName evidence="1">UDP-ManNAcA transferase</shortName>
        <ecNumber evidence="1">2.4.1.180</ecNumber>
    </recommendedName>
</protein>
<name>WECG_SALNS</name>
<reference key="1">
    <citation type="journal article" date="2011" name="J. Bacteriol.">
        <title>Comparative genomics of 28 Salmonella enterica isolates: evidence for CRISPR-mediated adaptive sublineage evolution.</title>
        <authorList>
            <person name="Fricke W.F."/>
            <person name="Mammel M.K."/>
            <person name="McDermott P.F."/>
            <person name="Tartera C."/>
            <person name="White D.G."/>
            <person name="Leclerc J.E."/>
            <person name="Ravel J."/>
            <person name="Cebula T.A."/>
        </authorList>
    </citation>
    <scope>NUCLEOTIDE SEQUENCE [LARGE SCALE GENOMIC DNA]</scope>
    <source>
        <strain>SL254</strain>
    </source>
</reference>